<organism>
    <name type="scientific">Eremothecium gossypii (strain ATCC 10895 / CBS 109.51 / FGSC 9923 / NRRL Y-1056)</name>
    <name type="common">Yeast</name>
    <name type="synonym">Ashbya gossypii</name>
    <dbReference type="NCBI Taxonomy" id="284811"/>
    <lineage>
        <taxon>Eukaryota</taxon>
        <taxon>Fungi</taxon>
        <taxon>Dikarya</taxon>
        <taxon>Ascomycota</taxon>
        <taxon>Saccharomycotina</taxon>
        <taxon>Saccharomycetes</taxon>
        <taxon>Saccharomycetales</taxon>
        <taxon>Saccharomycetaceae</taxon>
        <taxon>Eremothecium</taxon>
    </lineage>
</organism>
<reference key="1">
    <citation type="journal article" date="2004" name="Science">
        <title>The Ashbya gossypii genome as a tool for mapping the ancient Saccharomyces cerevisiae genome.</title>
        <authorList>
            <person name="Dietrich F.S."/>
            <person name="Voegeli S."/>
            <person name="Brachat S."/>
            <person name="Lerch A."/>
            <person name="Gates K."/>
            <person name="Steiner S."/>
            <person name="Mohr C."/>
            <person name="Poehlmann R."/>
            <person name="Luedi P."/>
            <person name="Choi S."/>
            <person name="Wing R.A."/>
            <person name="Flavier A."/>
            <person name="Gaffney T.D."/>
            <person name="Philippsen P."/>
        </authorList>
    </citation>
    <scope>NUCLEOTIDE SEQUENCE [LARGE SCALE GENOMIC DNA]</scope>
    <source>
        <strain>ATCC 10895 / CBS 109.51 / FGSC 9923 / NRRL Y-1056</strain>
    </source>
</reference>
<reference key="2">
    <citation type="journal article" date="2013" name="G3 (Bethesda)">
        <title>Genomes of Ashbya fungi isolated from insects reveal four mating-type loci, numerous translocations, lack of transposons, and distinct gene duplications.</title>
        <authorList>
            <person name="Dietrich F.S."/>
            <person name="Voegeli S."/>
            <person name="Kuo S."/>
            <person name="Philippsen P."/>
        </authorList>
    </citation>
    <scope>GENOME REANNOTATION</scope>
    <source>
        <strain>ATCC 10895 / CBS 109.51 / FGSC 9923 / NRRL Y-1056</strain>
    </source>
</reference>
<keyword id="KW-0256">Endoplasmic reticulum</keyword>
<keyword id="KW-0328">Glycosyltransferase</keyword>
<keyword id="KW-0337">GPI-anchor biosynthesis</keyword>
<keyword id="KW-0472">Membrane</keyword>
<keyword id="KW-1185">Reference proteome</keyword>
<keyword id="KW-0808">Transferase</keyword>
<keyword id="KW-0812">Transmembrane</keyword>
<keyword id="KW-1133">Transmembrane helix</keyword>
<sequence length="595" mass="67312">MKERSILRTLFLWRLINALSIRSFFQADEYWQSLEPAHVKAFGYGGLTWEWQHGLRSYAFPMLFEMSYYVAWILGVATRMALQGLAHATALCGAVVPSGAAGVAAMKAVWELPEAAQELVEYYGVLYGPRVVMAAVAACGEFYSVLLVRKLYLRVADKGDDQKGDAAPVSRLALMLTMTNFFNCFFATRTFINSFEMTLTAVALYHWDWSGGLDVGSLGFSASLAVAAFACLQRPTNVLIWAVLGLFLVLNLVRSRRWQLLLTLVAKVAAAGALAVCANIAIDYYFYGGVLLPLLRFIEFNVTTPLAAFYGRAPWHFHLLQSVPLIVGYALPFFVGALLTHNFRRGNAGLLGSPIMQIKCVVVLNIALYSCIDHKEFRFLYPLQPLFLSLSALEMHTWLQHHHARGTAWLKRVQSLLYVLPVLSITAALVLNTAHEAGVVSVMDYLHSAVPSAESIGFIMPCHSTPWQSHLHRNDLGKLWAISCQPPLDLLHQEDAGDQLLTYMDESDHLYENIPEFIHKNFPPVFRRDLRSPGRQYAYEWPEFLVVFEHMDEAFMKEYLKDSNYVEVKRFFNTLSHWDSRRAGDVIVYHKSPWY</sequence>
<accession>Q75BG9</accession>
<name>GPI10_EREGS</name>
<comment type="function">
    <text evidence="1">Mannosyltransferase involved in glycosylphosphatidylinositol-anchor biosynthesis. Transfers the third mannose to Man2-GlcN-acyl-PI during GPI precursor assembly (By similarity).</text>
</comment>
<comment type="pathway">
    <text>Glycolipid biosynthesis; glycosylphosphatidylinositol-anchor biosynthesis.</text>
</comment>
<comment type="subcellular location">
    <subcellularLocation>
        <location evidence="1">Endoplasmic reticulum membrane</location>
        <topology evidence="1">Multi-pass membrane protein</topology>
    </subcellularLocation>
</comment>
<comment type="similarity">
    <text evidence="3">Belongs to the glycosyltransferase 22 family. PIGB subfamily.</text>
</comment>
<feature type="chain" id="PRO_0000246257" description="GPI mannosyltransferase 3">
    <location>
        <begin position="1"/>
        <end position="595"/>
    </location>
</feature>
<feature type="transmembrane region" description="Helical" evidence="2">
    <location>
        <begin position="58"/>
        <end position="78"/>
    </location>
</feature>
<feature type="transmembrane region" description="Helical" evidence="2">
    <location>
        <begin position="85"/>
        <end position="105"/>
    </location>
</feature>
<feature type="transmembrane region" description="Helical" evidence="2">
    <location>
        <begin position="128"/>
        <end position="148"/>
    </location>
</feature>
<feature type="transmembrane region" description="Helical" evidence="2">
    <location>
        <begin position="185"/>
        <end position="207"/>
    </location>
</feature>
<feature type="transmembrane region" description="Helical" evidence="2">
    <location>
        <begin position="212"/>
        <end position="232"/>
    </location>
</feature>
<feature type="transmembrane region" description="Helical" evidence="2">
    <location>
        <begin position="235"/>
        <end position="255"/>
    </location>
</feature>
<feature type="transmembrane region" description="Helical" evidence="2">
    <location>
        <begin position="260"/>
        <end position="280"/>
    </location>
</feature>
<feature type="transmembrane region" description="Helical" evidence="2">
    <location>
        <begin position="289"/>
        <end position="309"/>
    </location>
</feature>
<feature type="transmembrane region" description="Helical" evidence="2">
    <location>
        <begin position="319"/>
        <end position="339"/>
    </location>
</feature>
<feature type="transmembrane region" description="Helical" evidence="2">
    <location>
        <begin position="413"/>
        <end position="433"/>
    </location>
</feature>
<gene>
    <name type="primary">GPI10</name>
    <name type="ordered locus">ADL281C</name>
</gene>
<evidence type="ECO:0000250" key="1"/>
<evidence type="ECO:0000255" key="2"/>
<evidence type="ECO:0000305" key="3"/>
<dbReference type="EC" id="2.4.1.-"/>
<dbReference type="EMBL" id="AE016817">
    <property type="protein sequence ID" value="AAS51639.1"/>
    <property type="molecule type" value="Genomic_DNA"/>
</dbReference>
<dbReference type="RefSeq" id="NP_983815.1">
    <property type="nucleotide sequence ID" value="NM_209168.1"/>
</dbReference>
<dbReference type="FunCoup" id="Q75BG9">
    <property type="interactions" value="892"/>
</dbReference>
<dbReference type="STRING" id="284811.Q75BG9"/>
<dbReference type="CAZy" id="GT22">
    <property type="family name" value="Glycosyltransferase Family 22"/>
</dbReference>
<dbReference type="EnsemblFungi" id="AAS51639">
    <property type="protein sequence ID" value="AAS51639"/>
    <property type="gene ID" value="AGOS_ADL281C"/>
</dbReference>
<dbReference type="GeneID" id="4619950"/>
<dbReference type="KEGG" id="ago:AGOS_ADL281C"/>
<dbReference type="eggNOG" id="KOG1771">
    <property type="taxonomic scope" value="Eukaryota"/>
</dbReference>
<dbReference type="HOGENOM" id="CLU_012353_2_0_1"/>
<dbReference type="InParanoid" id="Q75BG9"/>
<dbReference type="OMA" id="HEWPDYL"/>
<dbReference type="OrthoDB" id="416834at2759"/>
<dbReference type="UniPathway" id="UPA00196"/>
<dbReference type="Proteomes" id="UP000000591">
    <property type="component" value="Chromosome IV"/>
</dbReference>
<dbReference type="GO" id="GO:0005789">
    <property type="term" value="C:endoplasmic reticulum membrane"/>
    <property type="evidence" value="ECO:0000318"/>
    <property type="project" value="GO_Central"/>
</dbReference>
<dbReference type="GO" id="GO:0000026">
    <property type="term" value="F:alpha-1,2-mannosyltransferase activity"/>
    <property type="evidence" value="ECO:0000318"/>
    <property type="project" value="GO_Central"/>
</dbReference>
<dbReference type="GO" id="GO:0006506">
    <property type="term" value="P:GPI anchor biosynthetic process"/>
    <property type="evidence" value="ECO:0000318"/>
    <property type="project" value="GO_Central"/>
</dbReference>
<dbReference type="InterPro" id="IPR005599">
    <property type="entry name" value="GPI_mannosylTrfase"/>
</dbReference>
<dbReference type="PANTHER" id="PTHR22760">
    <property type="entry name" value="GLYCOSYLTRANSFERASE"/>
    <property type="match status" value="1"/>
</dbReference>
<dbReference type="PANTHER" id="PTHR22760:SF4">
    <property type="entry name" value="GPI MANNOSYLTRANSFERASE 3"/>
    <property type="match status" value="1"/>
</dbReference>
<dbReference type="Pfam" id="PF03901">
    <property type="entry name" value="Glyco_transf_22"/>
    <property type="match status" value="1"/>
</dbReference>
<protein>
    <recommendedName>
        <fullName>GPI mannosyltransferase 3</fullName>
        <ecNumber>2.4.1.-</ecNumber>
    </recommendedName>
    <alternativeName>
        <fullName>GPI mannosyltransferase III</fullName>
        <shortName>GPI-MT-III</shortName>
    </alternativeName>
    <alternativeName>
        <fullName>Glycosylphosphatidylinositol-anchor biosynthesis protein 10</fullName>
    </alternativeName>
</protein>
<proteinExistence type="inferred from homology"/>